<feature type="chain" id="PRO_0000053819" description="Acyl-CoA thioester hydrolase YciA">
    <location>
        <begin position="1"/>
        <end position="133"/>
    </location>
</feature>
<feature type="domain" description="HotDog ACOT-type" evidence="2">
    <location>
        <begin position="8"/>
        <end position="123"/>
    </location>
</feature>
<reference key="1">
    <citation type="journal article" date="2001" name="Nature">
        <title>Complete genome sequence of a multiple drug resistant Salmonella enterica serovar Typhi CT18.</title>
        <authorList>
            <person name="Parkhill J."/>
            <person name="Dougan G."/>
            <person name="James K.D."/>
            <person name="Thomson N.R."/>
            <person name="Pickard D."/>
            <person name="Wain J."/>
            <person name="Churcher C.M."/>
            <person name="Mungall K.L."/>
            <person name="Bentley S.D."/>
            <person name="Holden M.T.G."/>
            <person name="Sebaihia M."/>
            <person name="Baker S."/>
            <person name="Basham D."/>
            <person name="Brooks K."/>
            <person name="Chillingworth T."/>
            <person name="Connerton P."/>
            <person name="Cronin A."/>
            <person name="Davis P."/>
            <person name="Davies R.M."/>
            <person name="Dowd L."/>
            <person name="White N."/>
            <person name="Farrar J."/>
            <person name="Feltwell T."/>
            <person name="Hamlin N."/>
            <person name="Haque A."/>
            <person name="Hien T.T."/>
            <person name="Holroyd S."/>
            <person name="Jagels K."/>
            <person name="Krogh A."/>
            <person name="Larsen T.S."/>
            <person name="Leather S."/>
            <person name="Moule S."/>
            <person name="O'Gaora P."/>
            <person name="Parry C."/>
            <person name="Quail M.A."/>
            <person name="Rutherford K.M."/>
            <person name="Simmonds M."/>
            <person name="Skelton J."/>
            <person name="Stevens K."/>
            <person name="Whitehead S."/>
            <person name="Barrell B.G."/>
        </authorList>
    </citation>
    <scope>NUCLEOTIDE SEQUENCE [LARGE SCALE GENOMIC DNA]</scope>
    <source>
        <strain>CT18</strain>
    </source>
</reference>
<reference key="2">
    <citation type="journal article" date="2003" name="J. Bacteriol.">
        <title>Comparative genomics of Salmonella enterica serovar Typhi strains Ty2 and CT18.</title>
        <authorList>
            <person name="Deng W."/>
            <person name="Liou S.-R."/>
            <person name="Plunkett G. III"/>
            <person name="Mayhew G.F."/>
            <person name="Rose D.J."/>
            <person name="Burland V."/>
            <person name="Kodoyianni V."/>
            <person name="Schwartz D.C."/>
            <person name="Blattner F.R."/>
        </authorList>
    </citation>
    <scope>NUCLEOTIDE SEQUENCE [LARGE SCALE GENOMIC DNA]</scope>
    <source>
        <strain>ATCC 700931 / Ty2</strain>
    </source>
</reference>
<keyword id="KW-0378">Hydrolase</keyword>
<gene>
    <name type="primary">yciA</name>
    <name type="ordered locus">STY1315</name>
    <name type="ordered locus">t1648</name>
</gene>
<sequence length="133" mass="14364">MTTMDNTPQGELVLRTLAMPADTNANGDIFGGWLMSQMDIGGAILAKEIAHGRVVTVRVEGMTFLRPVAVGDVVCCYARCVKRGTTSISINIEVWVKKVASEPIGQRYKATEALFIYVAVDPDGKPRPLPVQG</sequence>
<proteinExistence type="inferred from homology"/>
<protein>
    <recommendedName>
        <fullName>Acyl-CoA thioester hydrolase YciA</fullName>
        <ecNumber>3.1.2.-</ecNumber>
    </recommendedName>
</protein>
<dbReference type="EC" id="3.1.2.-"/>
<dbReference type="EMBL" id="AL513382">
    <property type="protein sequence ID" value="CAD08396.1"/>
    <property type="molecule type" value="Genomic_DNA"/>
</dbReference>
<dbReference type="EMBL" id="AE014613">
    <property type="protein sequence ID" value="AAO69275.1"/>
    <property type="molecule type" value="Genomic_DNA"/>
</dbReference>
<dbReference type="RefSeq" id="NP_455762.1">
    <property type="nucleotide sequence ID" value="NC_003198.1"/>
</dbReference>
<dbReference type="RefSeq" id="WP_000210317.1">
    <property type="nucleotide sequence ID" value="NZ_WSUR01000006.1"/>
</dbReference>
<dbReference type="SMR" id="P0A1A2"/>
<dbReference type="STRING" id="220341.gene:17585276"/>
<dbReference type="KEGG" id="stt:t1648"/>
<dbReference type="KEGG" id="sty:STY1315"/>
<dbReference type="PATRIC" id="fig|220341.7.peg.1322"/>
<dbReference type="eggNOG" id="COG1607">
    <property type="taxonomic scope" value="Bacteria"/>
</dbReference>
<dbReference type="HOGENOM" id="CLU_050164_2_0_6"/>
<dbReference type="OMA" id="MDEMAFL"/>
<dbReference type="OrthoDB" id="9801856at2"/>
<dbReference type="Proteomes" id="UP000000541">
    <property type="component" value="Chromosome"/>
</dbReference>
<dbReference type="Proteomes" id="UP000002670">
    <property type="component" value="Chromosome"/>
</dbReference>
<dbReference type="GO" id="GO:0005829">
    <property type="term" value="C:cytosol"/>
    <property type="evidence" value="ECO:0007669"/>
    <property type="project" value="TreeGrafter"/>
</dbReference>
<dbReference type="GO" id="GO:0052816">
    <property type="term" value="F:long-chain fatty acyl-CoA hydrolase activity"/>
    <property type="evidence" value="ECO:0007669"/>
    <property type="project" value="TreeGrafter"/>
</dbReference>
<dbReference type="GO" id="GO:0006637">
    <property type="term" value="P:acyl-CoA metabolic process"/>
    <property type="evidence" value="ECO:0007669"/>
    <property type="project" value="TreeGrafter"/>
</dbReference>
<dbReference type="GO" id="GO:0009062">
    <property type="term" value="P:fatty acid catabolic process"/>
    <property type="evidence" value="ECO:0007669"/>
    <property type="project" value="TreeGrafter"/>
</dbReference>
<dbReference type="CDD" id="cd03442">
    <property type="entry name" value="BFIT_BACH"/>
    <property type="match status" value="1"/>
</dbReference>
<dbReference type="FunFam" id="3.10.129.10:FF:000008">
    <property type="entry name" value="Acyl-CoA thioester hydrolase"/>
    <property type="match status" value="1"/>
</dbReference>
<dbReference type="Gene3D" id="3.10.129.10">
    <property type="entry name" value="Hotdog Thioesterase"/>
    <property type="match status" value="1"/>
</dbReference>
<dbReference type="InterPro" id="IPR040170">
    <property type="entry name" value="Cytosol_ACT"/>
</dbReference>
<dbReference type="InterPro" id="IPR033120">
    <property type="entry name" value="HOTDOG_ACOT"/>
</dbReference>
<dbReference type="InterPro" id="IPR029069">
    <property type="entry name" value="HotDog_dom_sf"/>
</dbReference>
<dbReference type="InterPro" id="IPR006683">
    <property type="entry name" value="Thioestr_dom"/>
</dbReference>
<dbReference type="NCBIfam" id="NF007970">
    <property type="entry name" value="PRK10694.1"/>
    <property type="match status" value="1"/>
</dbReference>
<dbReference type="PANTHER" id="PTHR11049">
    <property type="entry name" value="ACYL COENZYME A THIOESTER HYDROLASE"/>
    <property type="match status" value="1"/>
</dbReference>
<dbReference type="PANTHER" id="PTHR11049:SF5">
    <property type="entry name" value="ACYL-COA THIOESTER HYDROLASE YCIA"/>
    <property type="match status" value="1"/>
</dbReference>
<dbReference type="Pfam" id="PF03061">
    <property type="entry name" value="4HBT"/>
    <property type="match status" value="1"/>
</dbReference>
<dbReference type="SUPFAM" id="SSF54637">
    <property type="entry name" value="Thioesterase/thiol ester dehydrase-isomerase"/>
    <property type="match status" value="1"/>
</dbReference>
<dbReference type="PROSITE" id="PS51770">
    <property type="entry name" value="HOTDOG_ACOT"/>
    <property type="match status" value="1"/>
</dbReference>
<comment type="function">
    <text evidence="1">Catalyzes the hydrolysis of the thioester bond in palmitoyl-CoA and malonyl-CoA.</text>
</comment>
<comment type="similarity">
    <text evidence="3">Belongs to the acyl coenzyme A hydrolase family.</text>
</comment>
<evidence type="ECO:0000250" key="1"/>
<evidence type="ECO:0000255" key="2">
    <source>
        <dbReference type="PROSITE-ProRule" id="PRU01106"/>
    </source>
</evidence>
<evidence type="ECO:0000305" key="3"/>
<name>YCIA_SALTI</name>
<organism>
    <name type="scientific">Salmonella typhi</name>
    <dbReference type="NCBI Taxonomy" id="90370"/>
    <lineage>
        <taxon>Bacteria</taxon>
        <taxon>Pseudomonadati</taxon>
        <taxon>Pseudomonadota</taxon>
        <taxon>Gammaproteobacteria</taxon>
        <taxon>Enterobacterales</taxon>
        <taxon>Enterobacteriaceae</taxon>
        <taxon>Salmonella</taxon>
    </lineage>
</organism>
<accession>P0A1A2</accession>
<accession>P25944</accession>